<organism>
    <name type="scientific">Alligator mississippiensis</name>
    <name type="common">American alligator</name>
    <dbReference type="NCBI Taxonomy" id="8496"/>
    <lineage>
        <taxon>Eukaryota</taxon>
        <taxon>Metazoa</taxon>
        <taxon>Chordata</taxon>
        <taxon>Craniata</taxon>
        <taxon>Vertebrata</taxon>
        <taxon>Euteleostomi</taxon>
        <taxon>Archelosauria</taxon>
        <taxon>Archosauria</taxon>
        <taxon>Crocodylia</taxon>
        <taxon>Alligatoridae</taxon>
        <taxon>Alligatorinae</taxon>
        <taxon>Alligator</taxon>
    </lineage>
</organism>
<protein>
    <recommendedName>
        <fullName>Wilms tumor protein homolog</fullName>
    </recommendedName>
</protein>
<reference key="1">
    <citation type="journal article" date="1995" name="Oncogene">
        <title>The evolution of WT1 sequence and expression pattern in the vertebrates.</title>
        <authorList>
            <person name="Kent J."/>
            <person name="Coriat A.M."/>
            <person name="Sharpe P.T."/>
            <person name="Hastie N.D."/>
            <person name="van Heyningen V."/>
        </authorList>
    </citation>
    <scope>NUCLEOTIDE SEQUENCE [MRNA] (ISOFORMS 1 AND 2)</scope>
</reference>
<evidence type="ECO:0000250" key="1"/>
<evidence type="ECO:0000250" key="2">
    <source>
        <dbReference type="UniProtKB" id="P19544"/>
    </source>
</evidence>
<evidence type="ECO:0000255" key="3">
    <source>
        <dbReference type="PROSITE-ProRule" id="PRU00042"/>
    </source>
</evidence>
<evidence type="ECO:0000256" key="4">
    <source>
        <dbReference type="SAM" id="MobiDB-lite"/>
    </source>
</evidence>
<evidence type="ECO:0000303" key="5">
    <source>
    </source>
</evidence>
<evidence type="ECO:0000305" key="6"/>
<accession>P50902</accession>
<keyword id="KW-0025">Alternative splicing</keyword>
<keyword id="KW-0963">Cytoplasm</keyword>
<keyword id="KW-0238">DNA-binding</keyword>
<keyword id="KW-0479">Metal-binding</keyword>
<keyword id="KW-0539">Nucleus</keyword>
<keyword id="KW-0677">Repeat</keyword>
<keyword id="KW-0694">RNA-binding</keyword>
<keyword id="KW-0804">Transcription</keyword>
<keyword id="KW-0805">Transcription regulation</keyword>
<keyword id="KW-0862">Zinc</keyword>
<keyword id="KW-0863">Zinc-finger</keyword>
<sequence length="288" mass="33111">QGYSTVAFDGPPSYGHAPSHHAAQFSNHSFKHEDPIAQQTSLGDQQYSVPPPVYGCHTPTDSCTGSQALLLRTPYNSDNLYQMTSQLECMTWNQMNLGSTLKGHATGYENENHTAPMLYSCGAQYRIHTHGVFRGIQDVRRVPGVAPTIVRSASETNEKRPFMCAYPGCNKRYFKLSHLQMHSRKHTGEKPYQCDFKDCERRFSRSDQLKRHQRRHTGVKPFQCKTCQRKFSRSDHLKTHTRTHTGKTSEKPFSCRWPSCQKKFARSDELVRHHNMHQRNMTKLQLAL</sequence>
<name>WT1_ALLMI</name>
<comment type="function">
    <text evidence="2">Transcription factor that plays an important role in cellular development and cell survival. Recognizes and binds to the DNA sequence 5'-GCG(T/G)GGGCG-3'. Regulates the expression of numerous target genes. Plays an essential role for development of the urogenital system. It has a tumor suppressor as well as an oncogenic role in tumor formation. Function may be isoform-specific: isoforms lacking the KTS motif may act as transcription factors. Isoforms containing the KTS motif may bind mRNA and play a role in mRNA metabolism or splicing.</text>
</comment>
<comment type="subcellular location">
    <molecule>Isoform 1</molecule>
    <subcellularLocation>
        <location evidence="1">Nucleus speckle</location>
    </subcellularLocation>
</comment>
<comment type="subcellular location">
    <molecule>Isoform 2</molecule>
    <subcellularLocation>
        <location evidence="1">Nucleus</location>
        <location evidence="1">Nucleoplasm</location>
    </subcellularLocation>
</comment>
<comment type="subcellular location">
    <subcellularLocation>
        <location evidence="1">Nucleus</location>
    </subcellularLocation>
    <subcellularLocation>
        <location evidence="1">Cytoplasm</location>
    </subcellularLocation>
    <subcellularLocation>
        <location evidence="1">Nucleus speckle</location>
    </subcellularLocation>
    <text evidence="1">Shuttles between nucleus and cytoplasm.</text>
</comment>
<comment type="alternative products">
    <event type="alternative splicing"/>
    <isoform>
        <id>P50902-1</id>
        <name>1</name>
        <sequence type="displayed"/>
    </isoform>
    <isoform>
        <id>P50902-2</id>
        <name>2</name>
        <sequence type="described" ref="VSP_006874"/>
    </isoform>
</comment>
<comment type="domain">
    <text evidence="2">Binds to DNA motifs with the sequence 5'-GCG(T/G)GGGCG-3' via its C2H2-type zinc fingers. Starting from the N-terminus, the second zinc finger binds to the 3'-GCG motif, the middle zinc finger interacts with the central TGG motif, and the C-terminal zinc finger binds to the 5'-GCG motif. Binds double-stranded target DNA, irrespective of the cytosine methylation status. Has reduced affinity for target DNA where the cytosines have been oxidized to 5-hydroxymethylcytosine, 5-formylcytosine or 5-carboxylcytosine.</text>
</comment>
<comment type="domain">
    <text evidence="2">The 9aaTAD motif is a transactivation domain present in a large number of yeast and animal transcription factors.</text>
</comment>
<comment type="miscellaneous">
    <text evidence="1">Presence of the KTS motif hinders interactions between DNA and zinc-finger 4.</text>
</comment>
<comment type="similarity">
    <text evidence="6">Belongs to the EGR C2H2-type zinc-finger protein family.</text>
</comment>
<gene>
    <name type="primary">WT1</name>
</gene>
<proteinExistence type="evidence at transcript level"/>
<dbReference type="EMBL" id="X85730">
    <property type="protein sequence ID" value="CAA59735.1"/>
    <property type="molecule type" value="mRNA"/>
</dbReference>
<dbReference type="SMR" id="P50902"/>
<dbReference type="eggNOG" id="KOG1721">
    <property type="taxonomic scope" value="Eukaryota"/>
</dbReference>
<dbReference type="GO" id="GO:0005737">
    <property type="term" value="C:cytoplasm"/>
    <property type="evidence" value="ECO:0000250"/>
    <property type="project" value="UniProtKB"/>
</dbReference>
<dbReference type="GO" id="GO:0016607">
    <property type="term" value="C:nuclear speck"/>
    <property type="evidence" value="ECO:0000250"/>
    <property type="project" value="UniProtKB"/>
</dbReference>
<dbReference type="GO" id="GO:0005654">
    <property type="term" value="C:nucleoplasm"/>
    <property type="evidence" value="ECO:0000250"/>
    <property type="project" value="UniProtKB"/>
</dbReference>
<dbReference type="GO" id="GO:0005634">
    <property type="term" value="C:nucleus"/>
    <property type="evidence" value="ECO:0000250"/>
    <property type="project" value="UniProtKB"/>
</dbReference>
<dbReference type="GO" id="GO:0001228">
    <property type="term" value="F:DNA-binding transcription activator activity, RNA polymerase II-specific"/>
    <property type="evidence" value="ECO:0000250"/>
    <property type="project" value="UniProtKB"/>
</dbReference>
<dbReference type="GO" id="GO:0003700">
    <property type="term" value="F:DNA-binding transcription factor activity"/>
    <property type="evidence" value="ECO:0000250"/>
    <property type="project" value="UniProtKB"/>
</dbReference>
<dbReference type="GO" id="GO:0010385">
    <property type="term" value="F:double-stranded methylated DNA binding"/>
    <property type="evidence" value="ECO:0000250"/>
    <property type="project" value="UniProtKB"/>
</dbReference>
<dbReference type="GO" id="GO:0044729">
    <property type="term" value="F:hemi-methylated DNA-binding"/>
    <property type="evidence" value="ECO:0000250"/>
    <property type="project" value="UniProtKB"/>
</dbReference>
<dbReference type="GO" id="GO:0003723">
    <property type="term" value="F:RNA binding"/>
    <property type="evidence" value="ECO:0007669"/>
    <property type="project" value="UniProtKB-KW"/>
</dbReference>
<dbReference type="GO" id="GO:0000978">
    <property type="term" value="F:RNA polymerase II cis-regulatory region sequence-specific DNA binding"/>
    <property type="evidence" value="ECO:0007669"/>
    <property type="project" value="TreeGrafter"/>
</dbReference>
<dbReference type="GO" id="GO:0043565">
    <property type="term" value="F:sequence-specific DNA binding"/>
    <property type="evidence" value="ECO:0000250"/>
    <property type="project" value="UniProtKB"/>
</dbReference>
<dbReference type="GO" id="GO:0000976">
    <property type="term" value="F:transcription cis-regulatory region binding"/>
    <property type="evidence" value="ECO:0000250"/>
    <property type="project" value="UniProtKB"/>
</dbReference>
<dbReference type="GO" id="GO:0008270">
    <property type="term" value="F:zinc ion binding"/>
    <property type="evidence" value="ECO:0000250"/>
    <property type="project" value="UniProtKB"/>
</dbReference>
<dbReference type="GO" id="GO:0035802">
    <property type="term" value="P:adrenal cortex formation"/>
    <property type="evidence" value="ECO:0000250"/>
    <property type="project" value="UniProtKB"/>
</dbReference>
<dbReference type="GO" id="GO:0030325">
    <property type="term" value="P:adrenal gland development"/>
    <property type="evidence" value="ECO:0000250"/>
    <property type="project" value="UniProtKB"/>
</dbReference>
<dbReference type="GO" id="GO:0001658">
    <property type="term" value="P:branching involved in ureteric bud morphogenesis"/>
    <property type="evidence" value="ECO:0000250"/>
    <property type="project" value="UniProtKB"/>
</dbReference>
<dbReference type="GO" id="GO:0043010">
    <property type="term" value="P:camera-type eye development"/>
    <property type="evidence" value="ECO:0000250"/>
    <property type="project" value="UniProtKB"/>
</dbReference>
<dbReference type="GO" id="GO:0071371">
    <property type="term" value="P:cellular response to gonadotropin stimulus"/>
    <property type="evidence" value="ECO:0000250"/>
    <property type="project" value="UniProtKB"/>
</dbReference>
<dbReference type="GO" id="GO:0060539">
    <property type="term" value="P:diaphragm development"/>
    <property type="evidence" value="ECO:0000250"/>
    <property type="project" value="UniProtKB"/>
</dbReference>
<dbReference type="GO" id="GO:0030855">
    <property type="term" value="P:epithelial cell differentiation"/>
    <property type="evidence" value="ECO:0000250"/>
    <property type="project" value="UniProtKB"/>
</dbReference>
<dbReference type="GO" id="GO:0007281">
    <property type="term" value="P:germ cell development"/>
    <property type="evidence" value="ECO:0000250"/>
    <property type="project" value="UniProtKB"/>
</dbReference>
<dbReference type="GO" id="GO:0032835">
    <property type="term" value="P:glomerulus development"/>
    <property type="evidence" value="ECO:0000250"/>
    <property type="project" value="UniProtKB"/>
</dbReference>
<dbReference type="GO" id="GO:0008406">
    <property type="term" value="P:gonad development"/>
    <property type="evidence" value="ECO:0000250"/>
    <property type="project" value="UniProtKB"/>
</dbReference>
<dbReference type="GO" id="GO:0007507">
    <property type="term" value="P:heart development"/>
    <property type="evidence" value="ECO:0000250"/>
    <property type="project" value="UniProtKB"/>
</dbReference>
<dbReference type="GO" id="GO:0030539">
    <property type="term" value="P:male genitalia development"/>
    <property type="evidence" value="ECO:0000250"/>
    <property type="project" value="UniProtKB"/>
</dbReference>
<dbReference type="GO" id="GO:0060231">
    <property type="term" value="P:mesenchymal to epithelial transition"/>
    <property type="evidence" value="ECO:0000250"/>
    <property type="project" value="UniProtKB"/>
</dbReference>
<dbReference type="GO" id="GO:0072075">
    <property type="term" value="P:metanephric mesenchyme development"/>
    <property type="evidence" value="ECO:0000250"/>
    <property type="project" value="UniProtKB"/>
</dbReference>
<dbReference type="GO" id="GO:0072284">
    <property type="term" value="P:metanephric S-shaped body morphogenesis"/>
    <property type="evidence" value="ECO:0000250"/>
    <property type="project" value="UniProtKB"/>
</dbReference>
<dbReference type="GO" id="GO:0043066">
    <property type="term" value="P:negative regulation of apoptotic process"/>
    <property type="evidence" value="ECO:0000250"/>
    <property type="project" value="UniProtKB"/>
</dbReference>
<dbReference type="GO" id="GO:0030308">
    <property type="term" value="P:negative regulation of cell growth"/>
    <property type="evidence" value="ECO:0000250"/>
    <property type="project" value="UniProtKB"/>
</dbReference>
<dbReference type="GO" id="GO:0045892">
    <property type="term" value="P:negative regulation of DNA-templated transcription"/>
    <property type="evidence" value="ECO:0000250"/>
    <property type="project" value="UniProtKB"/>
</dbReference>
<dbReference type="GO" id="GO:2000195">
    <property type="term" value="P:negative regulation of female gonad development"/>
    <property type="evidence" value="ECO:0000250"/>
    <property type="project" value="UniProtKB"/>
</dbReference>
<dbReference type="GO" id="GO:0072302">
    <property type="term" value="P:negative regulation of metanephric glomerular mesangial cell proliferation"/>
    <property type="evidence" value="ECO:0000250"/>
    <property type="project" value="UniProtKB"/>
</dbReference>
<dbReference type="GO" id="GO:0017148">
    <property type="term" value="P:negative regulation of translation"/>
    <property type="evidence" value="ECO:0000250"/>
    <property type="project" value="UniProtKB"/>
</dbReference>
<dbReference type="GO" id="GO:0072112">
    <property type="term" value="P:podocyte differentiation"/>
    <property type="evidence" value="ECO:0000250"/>
    <property type="project" value="UniProtKB"/>
</dbReference>
<dbReference type="GO" id="GO:0043065">
    <property type="term" value="P:positive regulation of apoptotic process"/>
    <property type="evidence" value="ECO:0000250"/>
    <property type="project" value="UniProtKB"/>
</dbReference>
<dbReference type="GO" id="GO:0045893">
    <property type="term" value="P:positive regulation of DNA-templated transcription"/>
    <property type="evidence" value="ECO:0000250"/>
    <property type="project" value="UniProtKB"/>
</dbReference>
<dbReference type="GO" id="GO:0060421">
    <property type="term" value="P:positive regulation of heart growth"/>
    <property type="evidence" value="ECO:0000250"/>
    <property type="project" value="UniProtKB"/>
</dbReference>
<dbReference type="GO" id="GO:2000020">
    <property type="term" value="P:positive regulation of male gonad development"/>
    <property type="evidence" value="ECO:0000250"/>
    <property type="project" value="UniProtKB"/>
</dbReference>
<dbReference type="GO" id="GO:2001076">
    <property type="term" value="P:positive regulation of metanephric ureteric bud development"/>
    <property type="evidence" value="ECO:0000250"/>
    <property type="project" value="UniProtKB"/>
</dbReference>
<dbReference type="GO" id="GO:0072166">
    <property type="term" value="P:posterior mesonephric tubule development"/>
    <property type="evidence" value="ECO:0000250"/>
    <property type="project" value="UniProtKB"/>
</dbReference>
<dbReference type="GO" id="GO:0003156">
    <property type="term" value="P:regulation of animal organ formation"/>
    <property type="evidence" value="ECO:0000250"/>
    <property type="project" value="UniProtKB"/>
</dbReference>
<dbReference type="GO" id="GO:0006355">
    <property type="term" value="P:regulation of DNA-templated transcription"/>
    <property type="evidence" value="ECO:0000250"/>
    <property type="project" value="UniProtKB"/>
</dbReference>
<dbReference type="GO" id="GO:0006357">
    <property type="term" value="P:regulation of transcription by RNA polymerase II"/>
    <property type="evidence" value="ECO:0000250"/>
    <property type="project" value="UniProtKB"/>
</dbReference>
<dbReference type="GO" id="GO:0008380">
    <property type="term" value="P:RNA splicing"/>
    <property type="evidence" value="ECO:0000250"/>
    <property type="project" value="UniProtKB"/>
</dbReference>
<dbReference type="GO" id="GO:0007530">
    <property type="term" value="P:sex determination"/>
    <property type="evidence" value="ECO:0000250"/>
    <property type="project" value="UniProtKB"/>
</dbReference>
<dbReference type="GO" id="GO:0007356">
    <property type="term" value="P:thorax and anterior abdomen determination"/>
    <property type="evidence" value="ECO:0000250"/>
    <property type="project" value="UniProtKB"/>
</dbReference>
<dbReference type="GO" id="GO:0009888">
    <property type="term" value="P:tissue development"/>
    <property type="evidence" value="ECO:0000250"/>
    <property type="project" value="UniProtKB"/>
</dbReference>
<dbReference type="GO" id="GO:0001657">
    <property type="term" value="P:ureteric bud development"/>
    <property type="evidence" value="ECO:0000250"/>
    <property type="project" value="UniProtKB"/>
</dbReference>
<dbReference type="GO" id="GO:0001570">
    <property type="term" value="P:vasculogenesis"/>
    <property type="evidence" value="ECO:0000250"/>
    <property type="project" value="UniProtKB"/>
</dbReference>
<dbReference type="GO" id="GO:0061032">
    <property type="term" value="P:visceral serous pericardium development"/>
    <property type="evidence" value="ECO:0000250"/>
    <property type="project" value="UniProtKB"/>
</dbReference>
<dbReference type="FunFam" id="3.30.160.60:FF:000018">
    <property type="entry name" value="Krueppel-like factor 15"/>
    <property type="match status" value="1"/>
</dbReference>
<dbReference type="FunFam" id="3.30.160.60:FF:000228">
    <property type="entry name" value="Wilms tumor 1-KTS isoform"/>
    <property type="match status" value="1"/>
</dbReference>
<dbReference type="FunFam" id="3.30.160.60:FF:000241">
    <property type="entry name" value="Wilms tumor 1-KTS isoform"/>
    <property type="match status" value="1"/>
</dbReference>
<dbReference type="FunFam" id="3.30.160.60:FF:001182">
    <property type="entry name" value="Zinc finger, C2H2 type"/>
    <property type="match status" value="1"/>
</dbReference>
<dbReference type="Gene3D" id="3.30.160.60">
    <property type="entry name" value="Classic Zinc Finger"/>
    <property type="match status" value="4"/>
</dbReference>
<dbReference type="InterPro" id="IPR000976">
    <property type="entry name" value="Wilms_tumour_N"/>
</dbReference>
<dbReference type="InterPro" id="IPR036236">
    <property type="entry name" value="Znf_C2H2_sf"/>
</dbReference>
<dbReference type="InterPro" id="IPR013087">
    <property type="entry name" value="Znf_C2H2_type"/>
</dbReference>
<dbReference type="PANTHER" id="PTHR23235:SF65">
    <property type="entry name" value="KRUEPPEL-LIKE FACTOR 11"/>
    <property type="match status" value="1"/>
</dbReference>
<dbReference type="PANTHER" id="PTHR23235">
    <property type="entry name" value="KRUEPPEL-LIKE TRANSCRIPTION FACTOR"/>
    <property type="match status" value="1"/>
</dbReference>
<dbReference type="Pfam" id="PF02165">
    <property type="entry name" value="WT1"/>
    <property type="match status" value="1"/>
</dbReference>
<dbReference type="Pfam" id="PF00096">
    <property type="entry name" value="zf-C2H2"/>
    <property type="match status" value="3"/>
</dbReference>
<dbReference type="SMART" id="SM00355">
    <property type="entry name" value="ZnF_C2H2"/>
    <property type="match status" value="4"/>
</dbReference>
<dbReference type="SUPFAM" id="SSF57667">
    <property type="entry name" value="beta-beta-alpha zinc fingers"/>
    <property type="match status" value="2"/>
</dbReference>
<dbReference type="PROSITE" id="PS00028">
    <property type="entry name" value="ZINC_FINGER_C2H2_1"/>
    <property type="match status" value="4"/>
</dbReference>
<dbReference type="PROSITE" id="PS50157">
    <property type="entry name" value="ZINC_FINGER_C2H2_2"/>
    <property type="match status" value="4"/>
</dbReference>
<feature type="chain" id="PRO_0000047135" description="Wilms tumor protein homolog">
    <location>
        <begin position="1" status="less than"/>
        <end position="288"/>
    </location>
</feature>
<feature type="zinc finger region" description="C2H2-type 1" evidence="3">
    <location>
        <begin position="162"/>
        <end position="186"/>
    </location>
</feature>
<feature type="zinc finger region" description="C2H2-type 2" evidence="3">
    <location>
        <begin position="192"/>
        <end position="216"/>
    </location>
</feature>
<feature type="zinc finger region" description="C2H2-type 3" evidence="3">
    <location>
        <begin position="222"/>
        <end position="244"/>
    </location>
</feature>
<feature type="zinc finger region" description="C2H2-type 4" evidence="3">
    <location>
        <begin position="253"/>
        <end position="277"/>
    </location>
</feature>
<feature type="region of interest" description="Disordered" evidence="4">
    <location>
        <begin position="1"/>
        <end position="21"/>
    </location>
</feature>
<feature type="region of interest" description="Important for interaction with target DNA" evidence="1">
    <location>
        <begin position="206"/>
        <end position="220"/>
    </location>
</feature>
<feature type="region of interest" description="Important for interaction with target DNA" evidence="1">
    <location>
        <begin position="232"/>
        <end position="240"/>
    </location>
</feature>
<feature type="short sequence motif" description="9aaTAD" evidence="2">
    <location>
        <begin position="90"/>
        <end position="98"/>
    </location>
</feature>
<feature type="short sequence motif" description="KTS motif" evidence="1">
    <location>
        <begin position="247"/>
        <end position="249"/>
    </location>
</feature>
<feature type="site" description="Important for interaction with target DNA" evidence="1">
    <location>
        <position position="263"/>
    </location>
</feature>
<feature type="site" description="Important for interaction with target DNA" evidence="1">
    <location>
        <position position="269"/>
    </location>
</feature>
<feature type="splice variant" id="VSP_006874" description="In isoform 2." evidence="5">
    <location>
        <begin position="247"/>
        <end position="249"/>
    </location>
</feature>
<feature type="non-terminal residue">
    <location>
        <position position="1"/>
    </location>
</feature>